<proteinExistence type="predicted"/>
<sequence length="56" mass="6122">MTILNIVSNLTLNKKSYNATIGKPISSGLTNYGAINISGYQVITKFFQSDNSLRNP</sequence>
<name>Y7164_DICDI</name>
<protein>
    <recommendedName>
        <fullName>Uncharacterized protein DDB_G0286865</fullName>
    </recommendedName>
</protein>
<feature type="chain" id="PRO_0000347049" description="Uncharacterized protein DDB_G0286865">
    <location>
        <begin position="1"/>
        <end position="56"/>
    </location>
</feature>
<gene>
    <name type="ORF">DDB_G0286865</name>
</gene>
<accession>Q54L68</accession>
<dbReference type="EMBL" id="AAFI02000091">
    <property type="protein sequence ID" value="EAL63990.1"/>
    <property type="molecule type" value="Genomic_DNA"/>
</dbReference>
<dbReference type="RefSeq" id="XP_637495.1">
    <property type="nucleotide sequence ID" value="XM_632403.1"/>
</dbReference>
<dbReference type="SMR" id="Q54L68"/>
<dbReference type="PaxDb" id="44689-DDB0187164"/>
<dbReference type="EnsemblProtists" id="EAL63990">
    <property type="protein sequence ID" value="EAL63990"/>
    <property type="gene ID" value="DDB_G0286865"/>
</dbReference>
<dbReference type="GeneID" id="8625834"/>
<dbReference type="KEGG" id="ddi:DDB_G0286865"/>
<dbReference type="dictyBase" id="DDB_G0286865"/>
<dbReference type="VEuPathDB" id="AmoebaDB:DDB_G0286865"/>
<dbReference type="HOGENOM" id="CLU_3018289_0_0_1"/>
<dbReference type="InParanoid" id="Q54L68"/>
<dbReference type="PRO" id="PR:Q54L68"/>
<dbReference type="Proteomes" id="UP000002195">
    <property type="component" value="Chromosome 4"/>
</dbReference>
<keyword id="KW-1185">Reference proteome</keyword>
<reference key="1">
    <citation type="journal article" date="2005" name="Nature">
        <title>The genome of the social amoeba Dictyostelium discoideum.</title>
        <authorList>
            <person name="Eichinger L."/>
            <person name="Pachebat J.A."/>
            <person name="Gloeckner G."/>
            <person name="Rajandream M.A."/>
            <person name="Sucgang R."/>
            <person name="Berriman M."/>
            <person name="Song J."/>
            <person name="Olsen R."/>
            <person name="Szafranski K."/>
            <person name="Xu Q."/>
            <person name="Tunggal B."/>
            <person name="Kummerfeld S."/>
            <person name="Madera M."/>
            <person name="Konfortov B.A."/>
            <person name="Rivero F."/>
            <person name="Bankier A.T."/>
            <person name="Lehmann R."/>
            <person name="Hamlin N."/>
            <person name="Davies R."/>
            <person name="Gaudet P."/>
            <person name="Fey P."/>
            <person name="Pilcher K."/>
            <person name="Chen G."/>
            <person name="Saunders D."/>
            <person name="Sodergren E.J."/>
            <person name="Davis P."/>
            <person name="Kerhornou A."/>
            <person name="Nie X."/>
            <person name="Hall N."/>
            <person name="Anjard C."/>
            <person name="Hemphill L."/>
            <person name="Bason N."/>
            <person name="Farbrother P."/>
            <person name="Desany B."/>
            <person name="Just E."/>
            <person name="Morio T."/>
            <person name="Rost R."/>
            <person name="Churcher C.M."/>
            <person name="Cooper J."/>
            <person name="Haydock S."/>
            <person name="van Driessche N."/>
            <person name="Cronin A."/>
            <person name="Goodhead I."/>
            <person name="Muzny D.M."/>
            <person name="Mourier T."/>
            <person name="Pain A."/>
            <person name="Lu M."/>
            <person name="Harper D."/>
            <person name="Lindsay R."/>
            <person name="Hauser H."/>
            <person name="James K.D."/>
            <person name="Quiles M."/>
            <person name="Madan Babu M."/>
            <person name="Saito T."/>
            <person name="Buchrieser C."/>
            <person name="Wardroper A."/>
            <person name="Felder M."/>
            <person name="Thangavelu M."/>
            <person name="Johnson D."/>
            <person name="Knights A."/>
            <person name="Loulseged H."/>
            <person name="Mungall K.L."/>
            <person name="Oliver K."/>
            <person name="Price C."/>
            <person name="Quail M.A."/>
            <person name="Urushihara H."/>
            <person name="Hernandez J."/>
            <person name="Rabbinowitsch E."/>
            <person name="Steffen D."/>
            <person name="Sanders M."/>
            <person name="Ma J."/>
            <person name="Kohara Y."/>
            <person name="Sharp S."/>
            <person name="Simmonds M.N."/>
            <person name="Spiegler S."/>
            <person name="Tivey A."/>
            <person name="Sugano S."/>
            <person name="White B."/>
            <person name="Walker D."/>
            <person name="Woodward J.R."/>
            <person name="Winckler T."/>
            <person name="Tanaka Y."/>
            <person name="Shaulsky G."/>
            <person name="Schleicher M."/>
            <person name="Weinstock G.M."/>
            <person name="Rosenthal A."/>
            <person name="Cox E.C."/>
            <person name="Chisholm R.L."/>
            <person name="Gibbs R.A."/>
            <person name="Loomis W.F."/>
            <person name="Platzer M."/>
            <person name="Kay R.R."/>
            <person name="Williams J.G."/>
            <person name="Dear P.H."/>
            <person name="Noegel A.A."/>
            <person name="Barrell B.G."/>
            <person name="Kuspa A."/>
        </authorList>
    </citation>
    <scope>NUCLEOTIDE SEQUENCE [LARGE SCALE GENOMIC DNA]</scope>
    <source>
        <strain>AX4</strain>
    </source>
</reference>
<organism>
    <name type="scientific">Dictyostelium discoideum</name>
    <name type="common">Social amoeba</name>
    <dbReference type="NCBI Taxonomy" id="44689"/>
    <lineage>
        <taxon>Eukaryota</taxon>
        <taxon>Amoebozoa</taxon>
        <taxon>Evosea</taxon>
        <taxon>Eumycetozoa</taxon>
        <taxon>Dictyostelia</taxon>
        <taxon>Dictyosteliales</taxon>
        <taxon>Dictyosteliaceae</taxon>
        <taxon>Dictyostelium</taxon>
    </lineage>
</organism>